<feature type="chain" id="PRO_0000234580" description="Zinc finger protein 524">
    <location>
        <begin position="1"/>
        <end position="321"/>
    </location>
</feature>
<feature type="DNA-binding region" description="A.T hook">
    <location>
        <begin position="49"/>
        <end position="59"/>
    </location>
</feature>
<feature type="zinc finger region" description="C2H2-type 1" evidence="1">
    <location>
        <begin position="109"/>
        <end position="131"/>
    </location>
</feature>
<feature type="zinc finger region" description="C2H2-type 2" evidence="1">
    <location>
        <begin position="137"/>
        <end position="159"/>
    </location>
</feature>
<feature type="zinc finger region" description="C2H2-type 3" evidence="1">
    <location>
        <begin position="165"/>
        <end position="187"/>
    </location>
</feature>
<feature type="zinc finger region" description="C2H2-type 4" evidence="1">
    <location>
        <begin position="193"/>
        <end position="216"/>
    </location>
</feature>
<feature type="region of interest" description="Disordered" evidence="2">
    <location>
        <begin position="1"/>
        <end position="80"/>
    </location>
</feature>
<feature type="region of interest" description="Disordered" evidence="2">
    <location>
        <begin position="86"/>
        <end position="105"/>
    </location>
</feature>
<feature type="region of interest" description="Disordered" evidence="2">
    <location>
        <begin position="248"/>
        <end position="321"/>
    </location>
</feature>
<feature type="compositionally biased region" description="Polar residues" evidence="2">
    <location>
        <begin position="1"/>
        <end position="14"/>
    </location>
</feature>
<feature type="compositionally biased region" description="Polar residues" evidence="2">
    <location>
        <begin position="39"/>
        <end position="48"/>
    </location>
</feature>
<feature type="compositionally biased region" description="Polar residues" evidence="2">
    <location>
        <begin position="262"/>
        <end position="271"/>
    </location>
</feature>
<feature type="compositionally biased region" description="Gly residues" evidence="2">
    <location>
        <begin position="274"/>
        <end position="285"/>
    </location>
</feature>
<feature type="sequence conflict" description="In Ref. 1; BAB22215." evidence="3" ref="1">
    <original>E</original>
    <variation>G</variation>
    <location>
        <position position="255"/>
    </location>
</feature>
<proteinExistence type="evidence at transcript level"/>
<comment type="function">
    <text>May be involved in transcriptional regulation.</text>
</comment>
<comment type="subcellular location">
    <subcellularLocation>
        <location evidence="3">Nucleus</location>
    </subcellularLocation>
</comment>
<comment type="similarity">
    <text evidence="3">Belongs to the krueppel C2H2-type zinc-finger protein family.</text>
</comment>
<comment type="sequence caution" evidence="3">
    <conflict type="frameshift">
        <sequence resource="EMBL-CDS" id="BAB22215"/>
    </conflict>
</comment>
<keyword id="KW-0238">DNA-binding</keyword>
<keyword id="KW-0479">Metal-binding</keyword>
<keyword id="KW-0539">Nucleus</keyword>
<keyword id="KW-1185">Reference proteome</keyword>
<keyword id="KW-0677">Repeat</keyword>
<keyword id="KW-0804">Transcription</keyword>
<keyword id="KW-0805">Transcription regulation</keyword>
<keyword id="KW-0862">Zinc</keyword>
<keyword id="KW-0863">Zinc-finger</keyword>
<organism>
    <name type="scientific">Mus musculus</name>
    <name type="common">Mouse</name>
    <dbReference type="NCBI Taxonomy" id="10090"/>
    <lineage>
        <taxon>Eukaryota</taxon>
        <taxon>Metazoa</taxon>
        <taxon>Chordata</taxon>
        <taxon>Craniata</taxon>
        <taxon>Vertebrata</taxon>
        <taxon>Euteleostomi</taxon>
        <taxon>Mammalia</taxon>
        <taxon>Eutheria</taxon>
        <taxon>Euarchontoglires</taxon>
        <taxon>Glires</taxon>
        <taxon>Rodentia</taxon>
        <taxon>Myomorpha</taxon>
        <taxon>Muroidea</taxon>
        <taxon>Muridae</taxon>
        <taxon>Murinae</taxon>
        <taxon>Mus</taxon>
        <taxon>Mus</taxon>
    </lineage>
</organism>
<dbReference type="EMBL" id="AK002594">
    <property type="protein sequence ID" value="BAB22215.1"/>
    <property type="status" value="ALT_FRAME"/>
    <property type="molecule type" value="mRNA"/>
</dbReference>
<dbReference type="EMBL" id="AK011620">
    <property type="protein sequence ID" value="BAB27739.1"/>
    <property type="molecule type" value="mRNA"/>
</dbReference>
<dbReference type="EMBL" id="AK154328">
    <property type="protein sequence ID" value="BAE32517.1"/>
    <property type="molecule type" value="mRNA"/>
</dbReference>
<dbReference type="EMBL" id="BC019995">
    <property type="protein sequence ID" value="AAH19995.1"/>
    <property type="molecule type" value="mRNA"/>
</dbReference>
<dbReference type="CCDS" id="CCDS20752.1"/>
<dbReference type="RefSeq" id="NP_079600.1">
    <property type="nucleotide sequence ID" value="NM_025324.2"/>
</dbReference>
<dbReference type="RefSeq" id="XP_006540339.1">
    <property type="nucleotide sequence ID" value="XM_006540276.2"/>
</dbReference>
<dbReference type="RefSeq" id="XP_006540340.1">
    <property type="nucleotide sequence ID" value="XM_006540277.3"/>
</dbReference>
<dbReference type="RefSeq" id="XP_011248972.1">
    <property type="nucleotide sequence ID" value="XM_011250670.1"/>
</dbReference>
<dbReference type="SMR" id="Q9D0B1"/>
<dbReference type="BioGRID" id="211183">
    <property type="interactions" value="1"/>
</dbReference>
<dbReference type="FunCoup" id="Q9D0B1">
    <property type="interactions" value="18"/>
</dbReference>
<dbReference type="IntAct" id="Q9D0B1">
    <property type="interactions" value="1"/>
</dbReference>
<dbReference type="STRING" id="10090.ENSMUSP00000146921"/>
<dbReference type="PhosphoSitePlus" id="Q9D0B1"/>
<dbReference type="PaxDb" id="10090-ENSMUSP00000083533"/>
<dbReference type="ProteomicsDB" id="299585"/>
<dbReference type="Pumba" id="Q9D0B1"/>
<dbReference type="DNASU" id="66056"/>
<dbReference type="Ensembl" id="ENSMUST00000086349.5">
    <property type="protein sequence ID" value="ENSMUSP00000083533.4"/>
    <property type="gene ID" value="ENSMUSG00000051184.8"/>
</dbReference>
<dbReference type="Ensembl" id="ENSMUST00000207901.2">
    <property type="protein sequence ID" value="ENSMUSP00000146921.2"/>
    <property type="gene ID" value="ENSMUSG00000051184.8"/>
</dbReference>
<dbReference type="Ensembl" id="ENSMUST00000209030.2">
    <property type="protein sequence ID" value="ENSMUSP00000147095.2"/>
    <property type="gene ID" value="ENSMUSG00000051184.8"/>
</dbReference>
<dbReference type="GeneID" id="66056"/>
<dbReference type="KEGG" id="mmu:66056"/>
<dbReference type="UCSC" id="uc009ezj.1">
    <property type="organism name" value="mouse"/>
</dbReference>
<dbReference type="AGR" id="MGI:1916740"/>
<dbReference type="CTD" id="66056"/>
<dbReference type="MGI" id="MGI:1916740">
    <property type="gene designation" value="Zfp524"/>
</dbReference>
<dbReference type="VEuPathDB" id="HostDB:ENSMUSG00000051184"/>
<dbReference type="eggNOG" id="KOG1721">
    <property type="taxonomic scope" value="Eukaryota"/>
</dbReference>
<dbReference type="GeneTree" id="ENSGT00940000163198"/>
<dbReference type="HOGENOM" id="CLU_1057530_0_0_1"/>
<dbReference type="InParanoid" id="Q9D0B1"/>
<dbReference type="OMA" id="HLITHRW"/>
<dbReference type="OrthoDB" id="3437960at2759"/>
<dbReference type="PhylomeDB" id="Q9D0B1"/>
<dbReference type="TreeFam" id="TF338348"/>
<dbReference type="BioGRID-ORCS" id="66056">
    <property type="hits" value="1 hit in 76 CRISPR screens"/>
</dbReference>
<dbReference type="PRO" id="PR:Q9D0B1"/>
<dbReference type="Proteomes" id="UP000000589">
    <property type="component" value="Chromosome 7"/>
</dbReference>
<dbReference type="RNAct" id="Q9D0B1">
    <property type="molecule type" value="protein"/>
</dbReference>
<dbReference type="Bgee" id="ENSMUSG00000051184">
    <property type="expression patterns" value="Expressed in granulocyte and 149 other cell types or tissues"/>
</dbReference>
<dbReference type="GO" id="GO:0005634">
    <property type="term" value="C:nucleus"/>
    <property type="evidence" value="ECO:0007669"/>
    <property type="project" value="UniProtKB-SubCell"/>
</dbReference>
<dbReference type="GO" id="GO:1990837">
    <property type="term" value="F:sequence-specific double-stranded DNA binding"/>
    <property type="evidence" value="ECO:0007669"/>
    <property type="project" value="Ensembl"/>
</dbReference>
<dbReference type="GO" id="GO:0008270">
    <property type="term" value="F:zinc ion binding"/>
    <property type="evidence" value="ECO:0007669"/>
    <property type="project" value="UniProtKB-KW"/>
</dbReference>
<dbReference type="FunFam" id="3.30.160.60:FF:001670">
    <property type="entry name" value="Zinc finger protein 524"/>
    <property type="match status" value="1"/>
</dbReference>
<dbReference type="FunFam" id="3.30.160.60:FF:001463">
    <property type="entry name" value="zinc finger protein 524"/>
    <property type="match status" value="1"/>
</dbReference>
<dbReference type="FunFam" id="3.30.160.60:FF:001650">
    <property type="entry name" value="zinc finger protein 524"/>
    <property type="match status" value="1"/>
</dbReference>
<dbReference type="Gene3D" id="3.30.160.60">
    <property type="entry name" value="Classic Zinc Finger"/>
    <property type="match status" value="4"/>
</dbReference>
<dbReference type="InterPro" id="IPR050331">
    <property type="entry name" value="Zinc_finger"/>
</dbReference>
<dbReference type="InterPro" id="IPR036236">
    <property type="entry name" value="Znf_C2H2_sf"/>
</dbReference>
<dbReference type="InterPro" id="IPR013087">
    <property type="entry name" value="Znf_C2H2_type"/>
</dbReference>
<dbReference type="PANTHER" id="PTHR16515">
    <property type="entry name" value="PR DOMAIN ZINC FINGER PROTEIN"/>
    <property type="match status" value="1"/>
</dbReference>
<dbReference type="PANTHER" id="PTHR16515:SF60">
    <property type="entry name" value="ZINC FINGER PROTEIN 436"/>
    <property type="match status" value="1"/>
</dbReference>
<dbReference type="Pfam" id="PF00096">
    <property type="entry name" value="zf-C2H2"/>
    <property type="match status" value="3"/>
</dbReference>
<dbReference type="SMART" id="SM00355">
    <property type="entry name" value="ZnF_C2H2"/>
    <property type="match status" value="4"/>
</dbReference>
<dbReference type="SUPFAM" id="SSF57667">
    <property type="entry name" value="beta-beta-alpha zinc fingers"/>
    <property type="match status" value="2"/>
</dbReference>
<dbReference type="PROSITE" id="PS00028">
    <property type="entry name" value="ZINC_FINGER_C2H2_1"/>
    <property type="match status" value="4"/>
</dbReference>
<dbReference type="PROSITE" id="PS50157">
    <property type="entry name" value="ZINC_FINGER_C2H2_2"/>
    <property type="match status" value="4"/>
</dbReference>
<sequence length="321" mass="34809">MDNPSSDPLPSTLSGEEEKPLALLPPVPRGRRGRPPGGATTSNRTLKSSLPRKRGRPPRSEQETPLTAPVDSGGSSDLLLIDDQGVPYTVPEGSAADGPQGSGSKRAPHFCPVCLRAFPYLSDLERHSISHSELKPHVCKDCGKTFKRSSHLRRHCNIHAGLRPFRCVLCPRRFREAGELAHHHRIHSGERPYQCPSCRVRFTEANTLRRHYKRKHPELVGMPVRLCPPNPRTQPLWDDDEGIPVQEGVQEESPEGKEPTWPISSTTSPLSGFTAGGSAGAGRGQEGQDTLVSGGIPTMEGDQKQGPKPLGPGAIGHPPVD</sequence>
<gene>
    <name type="primary">Znf524</name>
    <name type="synonym">Zfp524</name>
</gene>
<evidence type="ECO:0000255" key="1">
    <source>
        <dbReference type="PROSITE-ProRule" id="PRU00042"/>
    </source>
</evidence>
<evidence type="ECO:0000256" key="2">
    <source>
        <dbReference type="SAM" id="MobiDB-lite"/>
    </source>
</evidence>
<evidence type="ECO:0000305" key="3"/>
<accession>Q9D0B1</accession>
<accession>Q9DCQ0</accession>
<reference key="1">
    <citation type="journal article" date="2005" name="Science">
        <title>The transcriptional landscape of the mammalian genome.</title>
        <authorList>
            <person name="Carninci P."/>
            <person name="Kasukawa T."/>
            <person name="Katayama S."/>
            <person name="Gough J."/>
            <person name="Frith M.C."/>
            <person name="Maeda N."/>
            <person name="Oyama R."/>
            <person name="Ravasi T."/>
            <person name="Lenhard B."/>
            <person name="Wells C."/>
            <person name="Kodzius R."/>
            <person name="Shimokawa K."/>
            <person name="Bajic V.B."/>
            <person name="Brenner S.E."/>
            <person name="Batalov S."/>
            <person name="Forrest A.R."/>
            <person name="Zavolan M."/>
            <person name="Davis M.J."/>
            <person name="Wilming L.G."/>
            <person name="Aidinis V."/>
            <person name="Allen J.E."/>
            <person name="Ambesi-Impiombato A."/>
            <person name="Apweiler R."/>
            <person name="Aturaliya R.N."/>
            <person name="Bailey T.L."/>
            <person name="Bansal M."/>
            <person name="Baxter L."/>
            <person name="Beisel K.W."/>
            <person name="Bersano T."/>
            <person name="Bono H."/>
            <person name="Chalk A.M."/>
            <person name="Chiu K.P."/>
            <person name="Choudhary V."/>
            <person name="Christoffels A."/>
            <person name="Clutterbuck D.R."/>
            <person name="Crowe M.L."/>
            <person name="Dalla E."/>
            <person name="Dalrymple B.P."/>
            <person name="de Bono B."/>
            <person name="Della Gatta G."/>
            <person name="di Bernardo D."/>
            <person name="Down T."/>
            <person name="Engstrom P."/>
            <person name="Fagiolini M."/>
            <person name="Faulkner G."/>
            <person name="Fletcher C.F."/>
            <person name="Fukushima T."/>
            <person name="Furuno M."/>
            <person name="Futaki S."/>
            <person name="Gariboldi M."/>
            <person name="Georgii-Hemming P."/>
            <person name="Gingeras T.R."/>
            <person name="Gojobori T."/>
            <person name="Green R.E."/>
            <person name="Gustincich S."/>
            <person name="Harbers M."/>
            <person name="Hayashi Y."/>
            <person name="Hensch T.K."/>
            <person name="Hirokawa N."/>
            <person name="Hill D."/>
            <person name="Huminiecki L."/>
            <person name="Iacono M."/>
            <person name="Ikeo K."/>
            <person name="Iwama A."/>
            <person name="Ishikawa T."/>
            <person name="Jakt M."/>
            <person name="Kanapin A."/>
            <person name="Katoh M."/>
            <person name="Kawasawa Y."/>
            <person name="Kelso J."/>
            <person name="Kitamura H."/>
            <person name="Kitano H."/>
            <person name="Kollias G."/>
            <person name="Krishnan S.P."/>
            <person name="Kruger A."/>
            <person name="Kummerfeld S.K."/>
            <person name="Kurochkin I.V."/>
            <person name="Lareau L.F."/>
            <person name="Lazarevic D."/>
            <person name="Lipovich L."/>
            <person name="Liu J."/>
            <person name="Liuni S."/>
            <person name="McWilliam S."/>
            <person name="Madan Babu M."/>
            <person name="Madera M."/>
            <person name="Marchionni L."/>
            <person name="Matsuda H."/>
            <person name="Matsuzawa S."/>
            <person name="Miki H."/>
            <person name="Mignone F."/>
            <person name="Miyake S."/>
            <person name="Morris K."/>
            <person name="Mottagui-Tabar S."/>
            <person name="Mulder N."/>
            <person name="Nakano N."/>
            <person name="Nakauchi H."/>
            <person name="Ng P."/>
            <person name="Nilsson R."/>
            <person name="Nishiguchi S."/>
            <person name="Nishikawa S."/>
            <person name="Nori F."/>
            <person name="Ohara O."/>
            <person name="Okazaki Y."/>
            <person name="Orlando V."/>
            <person name="Pang K.C."/>
            <person name="Pavan W.J."/>
            <person name="Pavesi G."/>
            <person name="Pesole G."/>
            <person name="Petrovsky N."/>
            <person name="Piazza S."/>
            <person name="Reed J."/>
            <person name="Reid J.F."/>
            <person name="Ring B.Z."/>
            <person name="Ringwald M."/>
            <person name="Rost B."/>
            <person name="Ruan Y."/>
            <person name="Salzberg S.L."/>
            <person name="Sandelin A."/>
            <person name="Schneider C."/>
            <person name="Schoenbach C."/>
            <person name="Sekiguchi K."/>
            <person name="Semple C.A."/>
            <person name="Seno S."/>
            <person name="Sessa L."/>
            <person name="Sheng Y."/>
            <person name="Shibata Y."/>
            <person name="Shimada H."/>
            <person name="Shimada K."/>
            <person name="Silva D."/>
            <person name="Sinclair B."/>
            <person name="Sperling S."/>
            <person name="Stupka E."/>
            <person name="Sugiura K."/>
            <person name="Sultana R."/>
            <person name="Takenaka Y."/>
            <person name="Taki K."/>
            <person name="Tammoja K."/>
            <person name="Tan S.L."/>
            <person name="Tang S."/>
            <person name="Taylor M.S."/>
            <person name="Tegner J."/>
            <person name="Teichmann S.A."/>
            <person name="Ueda H.R."/>
            <person name="van Nimwegen E."/>
            <person name="Verardo R."/>
            <person name="Wei C.L."/>
            <person name="Yagi K."/>
            <person name="Yamanishi H."/>
            <person name="Zabarovsky E."/>
            <person name="Zhu S."/>
            <person name="Zimmer A."/>
            <person name="Hide W."/>
            <person name="Bult C."/>
            <person name="Grimmond S.M."/>
            <person name="Teasdale R.D."/>
            <person name="Liu E.T."/>
            <person name="Brusic V."/>
            <person name="Quackenbush J."/>
            <person name="Wahlestedt C."/>
            <person name="Mattick J.S."/>
            <person name="Hume D.A."/>
            <person name="Kai C."/>
            <person name="Sasaki D."/>
            <person name="Tomaru Y."/>
            <person name="Fukuda S."/>
            <person name="Kanamori-Katayama M."/>
            <person name="Suzuki M."/>
            <person name="Aoki J."/>
            <person name="Arakawa T."/>
            <person name="Iida J."/>
            <person name="Imamura K."/>
            <person name="Itoh M."/>
            <person name="Kato T."/>
            <person name="Kawaji H."/>
            <person name="Kawagashira N."/>
            <person name="Kawashima T."/>
            <person name="Kojima M."/>
            <person name="Kondo S."/>
            <person name="Konno H."/>
            <person name="Nakano K."/>
            <person name="Ninomiya N."/>
            <person name="Nishio T."/>
            <person name="Okada M."/>
            <person name="Plessy C."/>
            <person name="Shibata K."/>
            <person name="Shiraki T."/>
            <person name="Suzuki S."/>
            <person name="Tagami M."/>
            <person name="Waki K."/>
            <person name="Watahiki A."/>
            <person name="Okamura-Oho Y."/>
            <person name="Suzuki H."/>
            <person name="Kawai J."/>
            <person name="Hayashizaki Y."/>
        </authorList>
    </citation>
    <scope>NUCLEOTIDE SEQUENCE [LARGE SCALE MRNA]</scope>
    <source>
        <strain>C57BL/6J</strain>
        <strain>NOD</strain>
        <tissue>Dendritic cell</tissue>
        <tissue>Embryo</tissue>
        <tissue>Kidney</tissue>
    </source>
</reference>
<reference key="2">
    <citation type="journal article" date="2004" name="Genome Res.">
        <title>The status, quality, and expansion of the NIH full-length cDNA project: the Mammalian Gene Collection (MGC).</title>
        <authorList>
            <consortium name="The MGC Project Team"/>
        </authorList>
    </citation>
    <scope>NUCLEOTIDE SEQUENCE [LARGE SCALE MRNA]</scope>
    <source>
        <strain>FVB/N</strain>
        <tissue>Mammary tumor</tissue>
    </source>
</reference>
<name>ZN524_MOUSE</name>
<protein>
    <recommendedName>
        <fullName>Zinc finger protein 524</fullName>
    </recommendedName>
</protein>